<comment type="function">
    <text evidence="1">Reversibly transfers an adenylyl group from ATP to 4'-phosphopantetheine, yielding dephospho-CoA (dPCoA) and pyrophosphate.</text>
</comment>
<comment type="catalytic activity">
    <reaction evidence="1">
        <text>(R)-4'-phosphopantetheine + ATP + H(+) = 3'-dephospho-CoA + diphosphate</text>
        <dbReference type="Rhea" id="RHEA:19801"/>
        <dbReference type="ChEBI" id="CHEBI:15378"/>
        <dbReference type="ChEBI" id="CHEBI:30616"/>
        <dbReference type="ChEBI" id="CHEBI:33019"/>
        <dbReference type="ChEBI" id="CHEBI:57328"/>
        <dbReference type="ChEBI" id="CHEBI:61723"/>
        <dbReference type="EC" id="2.7.7.3"/>
    </reaction>
</comment>
<comment type="cofactor">
    <cofactor evidence="1">
        <name>Mg(2+)</name>
        <dbReference type="ChEBI" id="CHEBI:18420"/>
    </cofactor>
</comment>
<comment type="pathway">
    <text evidence="1">Cofactor biosynthesis; coenzyme A biosynthesis; CoA from (R)-pantothenate: step 4/5.</text>
</comment>
<comment type="subunit">
    <text evidence="1">Homohexamer.</text>
</comment>
<comment type="subcellular location">
    <subcellularLocation>
        <location evidence="1">Cytoplasm</location>
    </subcellularLocation>
</comment>
<comment type="similarity">
    <text evidence="1">Belongs to the bacterial CoaD family.</text>
</comment>
<protein>
    <recommendedName>
        <fullName evidence="1">Phosphopantetheine adenylyltransferase</fullName>
        <ecNumber evidence="1">2.7.7.3</ecNumber>
    </recommendedName>
    <alternativeName>
        <fullName evidence="1">Dephospho-CoA pyrophosphorylase</fullName>
    </alternativeName>
    <alternativeName>
        <fullName evidence="1">Pantetheine-phosphate adenylyltransferase</fullName>
        <shortName evidence="1">PPAT</shortName>
    </alternativeName>
</protein>
<evidence type="ECO:0000255" key="1">
    <source>
        <dbReference type="HAMAP-Rule" id="MF_00151"/>
    </source>
</evidence>
<name>COAD_DESAP</name>
<keyword id="KW-0067">ATP-binding</keyword>
<keyword id="KW-0173">Coenzyme A biosynthesis</keyword>
<keyword id="KW-0963">Cytoplasm</keyword>
<keyword id="KW-0460">Magnesium</keyword>
<keyword id="KW-0547">Nucleotide-binding</keyword>
<keyword id="KW-0548">Nucleotidyltransferase</keyword>
<keyword id="KW-1185">Reference proteome</keyword>
<keyword id="KW-0808">Transferase</keyword>
<dbReference type="EC" id="2.7.7.3" evidence="1"/>
<dbReference type="EMBL" id="CP000860">
    <property type="protein sequence ID" value="ACA59167.1"/>
    <property type="molecule type" value="Genomic_DNA"/>
</dbReference>
<dbReference type="RefSeq" id="WP_012301755.1">
    <property type="nucleotide sequence ID" value="NC_010424.1"/>
</dbReference>
<dbReference type="SMR" id="B1I2E4"/>
<dbReference type="STRING" id="477974.Daud_0633"/>
<dbReference type="KEGG" id="dau:Daud_0633"/>
<dbReference type="eggNOG" id="COG0669">
    <property type="taxonomic scope" value="Bacteria"/>
</dbReference>
<dbReference type="HOGENOM" id="CLU_100149_0_1_9"/>
<dbReference type="OrthoDB" id="9806661at2"/>
<dbReference type="UniPathway" id="UPA00241">
    <property type="reaction ID" value="UER00355"/>
</dbReference>
<dbReference type="Proteomes" id="UP000008544">
    <property type="component" value="Chromosome"/>
</dbReference>
<dbReference type="GO" id="GO:0005737">
    <property type="term" value="C:cytoplasm"/>
    <property type="evidence" value="ECO:0007669"/>
    <property type="project" value="UniProtKB-SubCell"/>
</dbReference>
<dbReference type="GO" id="GO:0005524">
    <property type="term" value="F:ATP binding"/>
    <property type="evidence" value="ECO:0007669"/>
    <property type="project" value="UniProtKB-KW"/>
</dbReference>
<dbReference type="GO" id="GO:0004595">
    <property type="term" value="F:pantetheine-phosphate adenylyltransferase activity"/>
    <property type="evidence" value="ECO:0007669"/>
    <property type="project" value="UniProtKB-UniRule"/>
</dbReference>
<dbReference type="GO" id="GO:0015937">
    <property type="term" value="P:coenzyme A biosynthetic process"/>
    <property type="evidence" value="ECO:0007669"/>
    <property type="project" value="UniProtKB-UniRule"/>
</dbReference>
<dbReference type="CDD" id="cd02163">
    <property type="entry name" value="PPAT"/>
    <property type="match status" value="1"/>
</dbReference>
<dbReference type="Gene3D" id="3.40.50.620">
    <property type="entry name" value="HUPs"/>
    <property type="match status" value="1"/>
</dbReference>
<dbReference type="HAMAP" id="MF_00151">
    <property type="entry name" value="PPAT_bact"/>
    <property type="match status" value="1"/>
</dbReference>
<dbReference type="InterPro" id="IPR004821">
    <property type="entry name" value="Cyt_trans-like"/>
</dbReference>
<dbReference type="InterPro" id="IPR001980">
    <property type="entry name" value="PPAT"/>
</dbReference>
<dbReference type="InterPro" id="IPR014729">
    <property type="entry name" value="Rossmann-like_a/b/a_fold"/>
</dbReference>
<dbReference type="NCBIfam" id="TIGR01510">
    <property type="entry name" value="coaD_prev_kdtB"/>
    <property type="match status" value="1"/>
</dbReference>
<dbReference type="NCBIfam" id="TIGR00125">
    <property type="entry name" value="cyt_tran_rel"/>
    <property type="match status" value="1"/>
</dbReference>
<dbReference type="PANTHER" id="PTHR21342">
    <property type="entry name" value="PHOSPHOPANTETHEINE ADENYLYLTRANSFERASE"/>
    <property type="match status" value="1"/>
</dbReference>
<dbReference type="PANTHER" id="PTHR21342:SF1">
    <property type="entry name" value="PHOSPHOPANTETHEINE ADENYLYLTRANSFERASE"/>
    <property type="match status" value="1"/>
</dbReference>
<dbReference type="Pfam" id="PF01467">
    <property type="entry name" value="CTP_transf_like"/>
    <property type="match status" value="1"/>
</dbReference>
<dbReference type="PRINTS" id="PR01020">
    <property type="entry name" value="LPSBIOSNTHSS"/>
</dbReference>
<dbReference type="SUPFAM" id="SSF52374">
    <property type="entry name" value="Nucleotidylyl transferase"/>
    <property type="match status" value="1"/>
</dbReference>
<feature type="chain" id="PRO_1000096787" description="Phosphopantetheine adenylyltransferase">
    <location>
        <begin position="1"/>
        <end position="163"/>
    </location>
</feature>
<feature type="binding site" evidence="1">
    <location>
        <begin position="9"/>
        <end position="10"/>
    </location>
    <ligand>
        <name>ATP</name>
        <dbReference type="ChEBI" id="CHEBI:30616"/>
    </ligand>
</feature>
<feature type="binding site" evidence="1">
    <location>
        <position position="9"/>
    </location>
    <ligand>
        <name>substrate</name>
    </ligand>
</feature>
<feature type="binding site" evidence="1">
    <location>
        <position position="17"/>
    </location>
    <ligand>
        <name>ATP</name>
        <dbReference type="ChEBI" id="CHEBI:30616"/>
    </ligand>
</feature>
<feature type="binding site" evidence="1">
    <location>
        <position position="41"/>
    </location>
    <ligand>
        <name>substrate</name>
    </ligand>
</feature>
<feature type="binding site" evidence="1">
    <location>
        <position position="73"/>
    </location>
    <ligand>
        <name>substrate</name>
    </ligand>
</feature>
<feature type="binding site" evidence="1">
    <location>
        <position position="87"/>
    </location>
    <ligand>
        <name>substrate</name>
    </ligand>
</feature>
<feature type="binding site" evidence="1">
    <location>
        <begin position="88"/>
        <end position="90"/>
    </location>
    <ligand>
        <name>ATP</name>
        <dbReference type="ChEBI" id="CHEBI:30616"/>
    </ligand>
</feature>
<feature type="binding site" evidence="1">
    <location>
        <position position="98"/>
    </location>
    <ligand>
        <name>ATP</name>
        <dbReference type="ChEBI" id="CHEBI:30616"/>
    </ligand>
</feature>
<feature type="binding site" evidence="1">
    <location>
        <begin position="123"/>
        <end position="129"/>
    </location>
    <ligand>
        <name>ATP</name>
        <dbReference type="ChEBI" id="CHEBI:30616"/>
    </ligand>
</feature>
<feature type="site" description="Transition state stabilizer" evidence="1">
    <location>
        <position position="17"/>
    </location>
</feature>
<reference key="1">
    <citation type="submission" date="2007-10" db="EMBL/GenBank/DDBJ databases">
        <title>Complete sequence of chromosome of Desulforudis audaxviator MP104C.</title>
        <authorList>
            <person name="Copeland A."/>
            <person name="Lucas S."/>
            <person name="Lapidus A."/>
            <person name="Barry K."/>
            <person name="Glavina del Rio T."/>
            <person name="Dalin E."/>
            <person name="Tice H."/>
            <person name="Bruce D."/>
            <person name="Pitluck S."/>
            <person name="Lowry S.R."/>
            <person name="Larimer F."/>
            <person name="Land M.L."/>
            <person name="Hauser L."/>
            <person name="Kyrpides N."/>
            <person name="Ivanova N.N."/>
            <person name="Richardson P."/>
        </authorList>
    </citation>
    <scope>NUCLEOTIDE SEQUENCE [LARGE SCALE GENOMIC DNA]</scope>
    <source>
        <strain>MP104C</strain>
    </source>
</reference>
<gene>
    <name evidence="1" type="primary">coaD</name>
    <name type="ordered locus">Daud_0633</name>
</gene>
<accession>B1I2E4</accession>
<organism>
    <name type="scientific">Desulforudis audaxviator (strain MP104C)</name>
    <dbReference type="NCBI Taxonomy" id="477974"/>
    <lineage>
        <taxon>Bacteria</taxon>
        <taxon>Bacillati</taxon>
        <taxon>Bacillota</taxon>
        <taxon>Clostridia</taxon>
        <taxon>Thermoanaerobacterales</taxon>
        <taxon>Candidatus Desulforudaceae</taxon>
        <taxon>Candidatus Desulforudis</taxon>
    </lineage>
</organism>
<sequence length="163" mass="18300">MKIAVYPGSFDPITNGHLDVIQRAAQVFDQVVVAVAHSSTKEPLFSIEERLDMLRVVLQKLPNVRVDAYRGLTVRYAREQGARALIRGLRAVSDFEYEFTMALTNKKLAPEIETVFLMTEAKYSFISSGSVKEVARYGGCLEDMVPVPVERILRDKFGMRGEG</sequence>
<proteinExistence type="inferred from homology"/>